<proteinExistence type="inferred from homology"/>
<evidence type="ECO:0000255" key="1">
    <source>
        <dbReference type="HAMAP-Rule" id="MF_00244"/>
    </source>
</evidence>
<feature type="chain" id="PRO_0000310136" description="Probable nicotinate-nucleotide adenylyltransferase">
    <location>
        <begin position="1"/>
        <end position="192"/>
    </location>
</feature>
<reference key="1">
    <citation type="submission" date="2007-02" db="EMBL/GenBank/DDBJ databases">
        <title>Complete sequence of chromosome 1 of Rhodobacter sphaeroides ATCC 17029.</title>
        <authorList>
            <person name="Copeland A."/>
            <person name="Lucas S."/>
            <person name="Lapidus A."/>
            <person name="Barry K."/>
            <person name="Detter J.C."/>
            <person name="Glavina del Rio T."/>
            <person name="Hammon N."/>
            <person name="Israni S."/>
            <person name="Dalin E."/>
            <person name="Tice H."/>
            <person name="Pitluck S."/>
            <person name="Kiss H."/>
            <person name="Brettin T."/>
            <person name="Bruce D."/>
            <person name="Han C."/>
            <person name="Tapia R."/>
            <person name="Gilna P."/>
            <person name="Schmutz J."/>
            <person name="Larimer F."/>
            <person name="Land M."/>
            <person name="Hauser L."/>
            <person name="Kyrpides N."/>
            <person name="Mikhailova N."/>
            <person name="Richardson P."/>
            <person name="Mackenzie C."/>
            <person name="Choudhary M."/>
            <person name="Donohue T.J."/>
            <person name="Kaplan S."/>
        </authorList>
    </citation>
    <scope>NUCLEOTIDE SEQUENCE [LARGE SCALE GENOMIC DNA]</scope>
    <source>
        <strain>ATCC 17029 / ATH 2.4.9</strain>
    </source>
</reference>
<dbReference type="EC" id="2.7.7.18" evidence="1"/>
<dbReference type="EMBL" id="CP000577">
    <property type="protein sequence ID" value="ABN77342.1"/>
    <property type="molecule type" value="Genomic_DNA"/>
</dbReference>
<dbReference type="RefSeq" id="WP_011841534.1">
    <property type="nucleotide sequence ID" value="NC_009049.1"/>
</dbReference>
<dbReference type="SMR" id="A3PLX6"/>
<dbReference type="KEGG" id="rsh:Rsph17029_2239"/>
<dbReference type="HOGENOM" id="CLU_069765_2_0_5"/>
<dbReference type="UniPathway" id="UPA00253">
    <property type="reaction ID" value="UER00332"/>
</dbReference>
<dbReference type="GO" id="GO:0005524">
    <property type="term" value="F:ATP binding"/>
    <property type="evidence" value="ECO:0007669"/>
    <property type="project" value="UniProtKB-KW"/>
</dbReference>
<dbReference type="GO" id="GO:0004515">
    <property type="term" value="F:nicotinate-nucleotide adenylyltransferase activity"/>
    <property type="evidence" value="ECO:0007669"/>
    <property type="project" value="UniProtKB-UniRule"/>
</dbReference>
<dbReference type="GO" id="GO:0009435">
    <property type="term" value="P:NAD biosynthetic process"/>
    <property type="evidence" value="ECO:0007669"/>
    <property type="project" value="UniProtKB-UniRule"/>
</dbReference>
<dbReference type="CDD" id="cd02165">
    <property type="entry name" value="NMNAT"/>
    <property type="match status" value="1"/>
</dbReference>
<dbReference type="Gene3D" id="3.40.50.620">
    <property type="entry name" value="HUPs"/>
    <property type="match status" value="1"/>
</dbReference>
<dbReference type="HAMAP" id="MF_00244">
    <property type="entry name" value="NaMN_adenylyltr"/>
    <property type="match status" value="1"/>
</dbReference>
<dbReference type="InterPro" id="IPR004821">
    <property type="entry name" value="Cyt_trans-like"/>
</dbReference>
<dbReference type="InterPro" id="IPR005248">
    <property type="entry name" value="NadD/NMNAT"/>
</dbReference>
<dbReference type="InterPro" id="IPR014729">
    <property type="entry name" value="Rossmann-like_a/b/a_fold"/>
</dbReference>
<dbReference type="NCBIfam" id="TIGR00125">
    <property type="entry name" value="cyt_tran_rel"/>
    <property type="match status" value="1"/>
</dbReference>
<dbReference type="NCBIfam" id="TIGR00482">
    <property type="entry name" value="nicotinate (nicotinamide) nucleotide adenylyltransferase"/>
    <property type="match status" value="1"/>
</dbReference>
<dbReference type="NCBIfam" id="NF000843">
    <property type="entry name" value="PRK00071.2-2"/>
    <property type="match status" value="1"/>
</dbReference>
<dbReference type="NCBIfam" id="NF000845">
    <property type="entry name" value="PRK00071.2-4"/>
    <property type="match status" value="1"/>
</dbReference>
<dbReference type="PANTHER" id="PTHR39321">
    <property type="entry name" value="NICOTINATE-NUCLEOTIDE ADENYLYLTRANSFERASE-RELATED"/>
    <property type="match status" value="1"/>
</dbReference>
<dbReference type="PANTHER" id="PTHR39321:SF3">
    <property type="entry name" value="PHOSPHOPANTETHEINE ADENYLYLTRANSFERASE"/>
    <property type="match status" value="1"/>
</dbReference>
<dbReference type="Pfam" id="PF01467">
    <property type="entry name" value="CTP_transf_like"/>
    <property type="match status" value="1"/>
</dbReference>
<dbReference type="SUPFAM" id="SSF52374">
    <property type="entry name" value="Nucleotidylyl transferase"/>
    <property type="match status" value="1"/>
</dbReference>
<sequence length="192" mass="21379">MVVGLLGGSFDPPHPGHVHITREALKRFGLDRVWWLVSPGNPLKPRPPAPLARRLAEARRLMRHPRVAVTGLEAEIGTRFTAETLAVLQRRYPGVRFVWLMGADNLAQFHRWERWRAIMESVPVGVLARPGAGLRARTSPAARRYASALLPEAEAARLGRSAAPAWCFVNLPMMDLSSTEIRATGRWRGQAD</sequence>
<protein>
    <recommendedName>
        <fullName evidence="1">Probable nicotinate-nucleotide adenylyltransferase</fullName>
        <ecNumber evidence="1">2.7.7.18</ecNumber>
    </recommendedName>
    <alternativeName>
        <fullName evidence="1">Deamido-NAD(+) diphosphorylase</fullName>
    </alternativeName>
    <alternativeName>
        <fullName evidence="1">Deamido-NAD(+) pyrophosphorylase</fullName>
    </alternativeName>
    <alternativeName>
        <fullName evidence="1">Nicotinate mononucleotide adenylyltransferase</fullName>
        <shortName evidence="1">NaMN adenylyltransferase</shortName>
    </alternativeName>
</protein>
<organism>
    <name type="scientific">Cereibacter sphaeroides (strain ATCC 17029 / ATH 2.4.9)</name>
    <name type="common">Rhodobacter sphaeroides</name>
    <dbReference type="NCBI Taxonomy" id="349101"/>
    <lineage>
        <taxon>Bacteria</taxon>
        <taxon>Pseudomonadati</taxon>
        <taxon>Pseudomonadota</taxon>
        <taxon>Alphaproteobacteria</taxon>
        <taxon>Rhodobacterales</taxon>
        <taxon>Paracoccaceae</taxon>
        <taxon>Cereibacter</taxon>
    </lineage>
</organism>
<comment type="function">
    <text evidence="1">Catalyzes the reversible adenylation of nicotinate mononucleotide (NaMN) to nicotinic acid adenine dinucleotide (NaAD).</text>
</comment>
<comment type="catalytic activity">
    <reaction evidence="1">
        <text>nicotinate beta-D-ribonucleotide + ATP + H(+) = deamido-NAD(+) + diphosphate</text>
        <dbReference type="Rhea" id="RHEA:22860"/>
        <dbReference type="ChEBI" id="CHEBI:15378"/>
        <dbReference type="ChEBI" id="CHEBI:30616"/>
        <dbReference type="ChEBI" id="CHEBI:33019"/>
        <dbReference type="ChEBI" id="CHEBI:57502"/>
        <dbReference type="ChEBI" id="CHEBI:58437"/>
        <dbReference type="EC" id="2.7.7.18"/>
    </reaction>
</comment>
<comment type="pathway">
    <text evidence="1">Cofactor biosynthesis; NAD(+) biosynthesis; deamido-NAD(+) from nicotinate D-ribonucleotide: step 1/1.</text>
</comment>
<comment type="similarity">
    <text evidence="1">Belongs to the NadD family.</text>
</comment>
<name>NADD_CERS1</name>
<accession>A3PLX6</accession>
<gene>
    <name evidence="1" type="primary">nadD</name>
    <name type="ordered locus">Rsph17029_2239</name>
</gene>
<keyword id="KW-0067">ATP-binding</keyword>
<keyword id="KW-0520">NAD</keyword>
<keyword id="KW-0547">Nucleotide-binding</keyword>
<keyword id="KW-0548">Nucleotidyltransferase</keyword>
<keyword id="KW-0662">Pyridine nucleotide biosynthesis</keyword>
<keyword id="KW-0808">Transferase</keyword>